<name>SHEP_DROVI</name>
<feature type="chain" id="PRO_0000379503" description="Protein alan shepard">
    <location>
        <begin position="1"/>
        <end position="595"/>
    </location>
</feature>
<feature type="domain" description="RRM 1" evidence="2">
    <location>
        <begin position="243"/>
        <end position="316"/>
    </location>
</feature>
<feature type="domain" description="RRM 2" evidence="2">
    <location>
        <begin position="322"/>
        <end position="401"/>
    </location>
</feature>
<feature type="region of interest" description="Disordered" evidence="3">
    <location>
        <begin position="1"/>
        <end position="82"/>
    </location>
</feature>
<feature type="region of interest" description="Disordered" evidence="3">
    <location>
        <begin position="184"/>
        <end position="238"/>
    </location>
</feature>
<feature type="region of interest" description="Disordered" evidence="3">
    <location>
        <begin position="569"/>
        <end position="595"/>
    </location>
</feature>
<feature type="compositionally biased region" description="Pro residues" evidence="3">
    <location>
        <begin position="1"/>
        <end position="12"/>
    </location>
</feature>
<feature type="compositionally biased region" description="Low complexity" evidence="3">
    <location>
        <begin position="13"/>
        <end position="31"/>
    </location>
</feature>
<feature type="compositionally biased region" description="Gly residues" evidence="3">
    <location>
        <begin position="32"/>
        <end position="43"/>
    </location>
</feature>
<feature type="compositionally biased region" description="Polar residues" evidence="3">
    <location>
        <begin position="50"/>
        <end position="68"/>
    </location>
</feature>
<feature type="compositionally biased region" description="Low complexity" evidence="3">
    <location>
        <begin position="69"/>
        <end position="78"/>
    </location>
</feature>
<feature type="compositionally biased region" description="Low complexity" evidence="3">
    <location>
        <begin position="190"/>
        <end position="238"/>
    </location>
</feature>
<feature type="modified residue" description="Phosphotyrosine" evidence="1">
    <location>
        <position position="5"/>
    </location>
</feature>
<feature type="modified residue" description="Phosphotyrosine" evidence="1">
    <location>
        <position position="138"/>
    </location>
</feature>
<feature type="modified residue" description="Phosphotyrosine" evidence="1">
    <location>
        <position position="154"/>
    </location>
</feature>
<organism>
    <name type="scientific">Drosophila virilis</name>
    <name type="common">Fruit fly</name>
    <dbReference type="NCBI Taxonomy" id="7244"/>
    <lineage>
        <taxon>Eukaryota</taxon>
        <taxon>Metazoa</taxon>
        <taxon>Ecdysozoa</taxon>
        <taxon>Arthropoda</taxon>
        <taxon>Hexapoda</taxon>
        <taxon>Insecta</taxon>
        <taxon>Pterygota</taxon>
        <taxon>Neoptera</taxon>
        <taxon>Endopterygota</taxon>
        <taxon>Diptera</taxon>
        <taxon>Brachycera</taxon>
        <taxon>Muscomorpha</taxon>
        <taxon>Ephydroidea</taxon>
        <taxon>Drosophilidae</taxon>
        <taxon>Drosophila</taxon>
    </lineage>
</organism>
<evidence type="ECO:0000250" key="1">
    <source>
        <dbReference type="UniProtKB" id="Q8MSV2"/>
    </source>
</evidence>
<evidence type="ECO:0000255" key="2">
    <source>
        <dbReference type="PROSITE-ProRule" id="PRU00176"/>
    </source>
</evidence>
<evidence type="ECO:0000256" key="3">
    <source>
        <dbReference type="SAM" id="MobiDB-lite"/>
    </source>
</evidence>
<evidence type="ECO:0000305" key="4"/>
<evidence type="ECO:0000312" key="5">
    <source>
        <dbReference type="EMBL" id="EDW69286.1"/>
    </source>
</evidence>
<gene>
    <name evidence="1" type="primary">shep</name>
    <name type="ORF">GJ12205</name>
</gene>
<comment type="function">
    <text evidence="1">Has a role in the perception of gravity.</text>
</comment>
<comment type="miscellaneous">
    <text>Named after Alan Bartlett Shepard, Jr. who was the second person and the first American in space and the fifth person to walk on the moon.</text>
</comment>
<comment type="sequence caution" evidence="4">
    <conflict type="erroneous gene model prediction">
        <sequence resource="EMBL-CDS" id="EDW69286"/>
    </conflict>
</comment>
<proteinExistence type="inferred from homology"/>
<reference evidence="5" key="1">
    <citation type="journal article" date="2007" name="Nature">
        <title>Evolution of genes and genomes on the Drosophila phylogeny.</title>
        <authorList>
            <consortium name="Drosophila 12 genomes consortium"/>
        </authorList>
    </citation>
    <scope>NUCLEOTIDE SEQUENCE [LARGE SCALE GENOMIC DNA]</scope>
    <source>
        <strain evidence="5">Tucson 15010-1051.87</strain>
    </source>
</reference>
<keyword id="KW-0597">Phosphoprotein</keyword>
<keyword id="KW-1185">Reference proteome</keyword>
<keyword id="KW-0677">Repeat</keyword>
<keyword id="KW-0694">RNA-binding</keyword>
<accession>B4LFQ9</accession>
<protein>
    <recommendedName>
        <fullName>Protein alan shepard</fullName>
    </recommendedName>
</protein>
<sequence>MHPRYSPAPPPHQQQQQQQQQPMGGPHQQQSAGGGPGHGGGASGHMRAPPNSQQLPPQMPRSQNYANGSSSAASVAAAPPTPRSAFPGAPLTASAVALKGAIPQRPPAMTSPAAAAAGAALAAGAPYRGATSWTPQGYAPAAAAAAAAVAQQAYRYTAPLPQPAYAAYTPHTATTQATTTYGQRVPTAASPSNTNSSSSSNTGSQSGTLSTSLSNTTNTNTTMGPNGTAQNQNQQGGEQLSKTNLYIRGLQQGTTDKDLINMCAQYGTIISTKAILDKTTNKCKGYGFVDFEQPAYAEGAVKGLQAKGVQAQMAKQQEQDPTNLYIANLPPHFKETDLEAMLAKYGQVVSTRILRDQQMNSKGVGFARMESREKCEQIIQMFNGNTIPGAKDPLLVKFADGGPKKKNLFKTPDPNARAWRDVSAEGIPVAYDPTMQQNGVSVNVGTPIGVPYSRFGAPQVGGYPVAGSQWIPGYMMTQPITQVDDQYSSSALQYMQMAAAPQLGVTSYKPEAVNQVQPRGISMMVSGDTAVPYGTMMPQLATLQIGNSYISPTYPYYAPPPTIIPTMPMTDSEQASTAASPDEAYTQYPHQAAPK</sequence>
<dbReference type="EMBL" id="CH940647">
    <property type="protein sequence ID" value="EDW69286.1"/>
    <property type="status" value="ALT_SEQ"/>
    <property type="molecule type" value="Genomic_DNA"/>
</dbReference>
<dbReference type="RefSeq" id="XP_002046944.2">
    <property type="nucleotide sequence ID" value="XM_002046908.2"/>
</dbReference>
<dbReference type="SMR" id="B4LFQ9"/>
<dbReference type="FunCoup" id="B4LFQ9">
    <property type="interactions" value="462"/>
</dbReference>
<dbReference type="STRING" id="7244.B4LFQ9"/>
<dbReference type="EnsemblMetazoa" id="FBtr0436529">
    <property type="protein sequence ID" value="FBpp0393420"/>
    <property type="gene ID" value="FBgn0199455"/>
</dbReference>
<dbReference type="eggNOG" id="KOG4733">
    <property type="taxonomic scope" value="Eukaryota"/>
</dbReference>
<dbReference type="InParanoid" id="B4LFQ9"/>
<dbReference type="OrthoDB" id="271725at2759"/>
<dbReference type="Proteomes" id="UP000008792">
    <property type="component" value="Unassembled WGS sequence"/>
</dbReference>
<dbReference type="GO" id="GO:1990904">
    <property type="term" value="C:ribonucleoprotein complex"/>
    <property type="evidence" value="ECO:0007669"/>
    <property type="project" value="InterPro"/>
</dbReference>
<dbReference type="GO" id="GO:0003723">
    <property type="term" value="F:RNA binding"/>
    <property type="evidence" value="ECO:0007669"/>
    <property type="project" value="UniProtKB-KW"/>
</dbReference>
<dbReference type="GO" id="GO:0009629">
    <property type="term" value="P:response to gravity"/>
    <property type="evidence" value="ECO:0000250"/>
    <property type="project" value="UniProtKB"/>
</dbReference>
<dbReference type="CDD" id="cd12244">
    <property type="entry name" value="RRM2_MSSP"/>
    <property type="match status" value="1"/>
</dbReference>
<dbReference type="FunFam" id="3.30.70.330:FF:000169">
    <property type="entry name" value="protein alan shepard isoform X4"/>
    <property type="match status" value="1"/>
</dbReference>
<dbReference type="FunFam" id="3.30.70.330:FF:000491">
    <property type="entry name" value="protein alan shepard isoform X6"/>
    <property type="match status" value="1"/>
</dbReference>
<dbReference type="Gene3D" id="3.30.70.330">
    <property type="match status" value="2"/>
</dbReference>
<dbReference type="InterPro" id="IPR002343">
    <property type="entry name" value="Hud_Sxl_RNA"/>
</dbReference>
<dbReference type="InterPro" id="IPR012677">
    <property type="entry name" value="Nucleotide-bd_a/b_plait_sf"/>
</dbReference>
<dbReference type="InterPro" id="IPR035979">
    <property type="entry name" value="RBD_domain_sf"/>
</dbReference>
<dbReference type="InterPro" id="IPR000504">
    <property type="entry name" value="RRM_dom"/>
</dbReference>
<dbReference type="PANTHER" id="PTHR24012">
    <property type="entry name" value="RNA BINDING PROTEIN"/>
    <property type="match status" value="1"/>
</dbReference>
<dbReference type="Pfam" id="PF00076">
    <property type="entry name" value="RRM_1"/>
    <property type="match status" value="2"/>
</dbReference>
<dbReference type="PRINTS" id="PR00961">
    <property type="entry name" value="HUDSXLRNA"/>
</dbReference>
<dbReference type="SMART" id="SM00360">
    <property type="entry name" value="RRM"/>
    <property type="match status" value="2"/>
</dbReference>
<dbReference type="SUPFAM" id="SSF54928">
    <property type="entry name" value="RNA-binding domain, RBD"/>
    <property type="match status" value="2"/>
</dbReference>
<dbReference type="PROSITE" id="PS50102">
    <property type="entry name" value="RRM"/>
    <property type="match status" value="2"/>
</dbReference>